<sequence>TITPSLKGFFIGLLSGAVVLGLTFAVLIAISQIDKVQRSL</sequence>
<organism>
    <name type="scientific">Thermostichus vulcanus</name>
    <name type="common">Synechococcus vulcanus</name>
    <dbReference type="NCBI Taxonomy" id="32053"/>
    <lineage>
        <taxon>Bacteria</taxon>
        <taxon>Bacillati</taxon>
        <taxon>Cyanobacteriota</taxon>
        <taxon>Cyanophyceae</taxon>
        <taxon>Thermostichales</taxon>
        <taxon>Thermostichaceae</taxon>
        <taxon>Thermostichus</taxon>
    </lineage>
</organism>
<keyword id="KW-0002">3D-structure</keyword>
<keyword id="KW-0472">Membrane</keyword>
<keyword id="KW-0602">Photosynthesis</keyword>
<keyword id="KW-0604">Photosystem II</keyword>
<keyword id="KW-0793">Thylakoid</keyword>
<keyword id="KW-0812">Transmembrane</keyword>
<keyword id="KW-1133">Transmembrane helix</keyword>
<accession>D0VWR4</accession>
<evidence type="ECO:0000255" key="1">
    <source>
        <dbReference type="HAMAP-Rule" id="MF_01386"/>
    </source>
</evidence>
<evidence type="ECO:0000269" key="2">
    <source>
    </source>
</evidence>
<evidence type="ECO:0000269" key="3">
    <source>
    </source>
</evidence>
<evidence type="ECO:0000269" key="4">
    <source>
    </source>
</evidence>
<evidence type="ECO:0000269" key="5">
    <source>
    </source>
</evidence>
<evidence type="ECO:0000305" key="6"/>
<evidence type="ECO:0007829" key="7">
    <source>
        <dbReference type="PDB" id="5B66"/>
    </source>
</evidence>
<name>PSBX_THEVL</name>
<dbReference type="PDB" id="3A0B">
    <property type="method" value="X-ray"/>
    <property type="resolution" value="3.70 A"/>
    <property type="chains" value="X/x=1-34"/>
</dbReference>
<dbReference type="PDB" id="3A0H">
    <property type="method" value="X-ray"/>
    <property type="resolution" value="4.00 A"/>
    <property type="chains" value="X/x=1-34"/>
</dbReference>
<dbReference type="PDB" id="3WU2">
    <property type="method" value="X-ray"/>
    <property type="resolution" value="1.90 A"/>
    <property type="chains" value="X/x=1-40"/>
</dbReference>
<dbReference type="PDB" id="4IL6">
    <property type="method" value="X-ray"/>
    <property type="resolution" value="2.10 A"/>
    <property type="chains" value="X/x=1-40"/>
</dbReference>
<dbReference type="PDB" id="4UB6">
    <property type="method" value="X-ray"/>
    <property type="resolution" value="1.95 A"/>
    <property type="chains" value="X/x=1-40"/>
</dbReference>
<dbReference type="PDB" id="4UB8">
    <property type="method" value="X-ray"/>
    <property type="resolution" value="1.95 A"/>
    <property type="chains" value="X/x=1-40"/>
</dbReference>
<dbReference type="PDB" id="5B5E">
    <property type="method" value="X-ray"/>
    <property type="resolution" value="1.87 A"/>
    <property type="chains" value="X/x=1-40"/>
</dbReference>
<dbReference type="PDB" id="5B66">
    <property type="method" value="X-ray"/>
    <property type="resolution" value="1.85 A"/>
    <property type="chains" value="X/x=1-40"/>
</dbReference>
<dbReference type="PDB" id="5GTH">
    <property type="method" value="X-ray"/>
    <property type="resolution" value="2.50 A"/>
    <property type="chains" value="X/x=1-40"/>
</dbReference>
<dbReference type="PDB" id="5GTI">
    <property type="method" value="X-ray"/>
    <property type="resolution" value="2.50 A"/>
    <property type="chains" value="X/x=1-40"/>
</dbReference>
<dbReference type="PDB" id="5V2C">
    <property type="method" value="X-ray"/>
    <property type="resolution" value="1.90 A"/>
    <property type="chains" value="X/x=1-40"/>
</dbReference>
<dbReference type="PDB" id="5WS5">
    <property type="method" value="X-ray"/>
    <property type="resolution" value="2.35 A"/>
    <property type="chains" value="X/x=1-40"/>
</dbReference>
<dbReference type="PDB" id="5WS6">
    <property type="method" value="X-ray"/>
    <property type="resolution" value="2.35 A"/>
    <property type="chains" value="X/x=1-40"/>
</dbReference>
<dbReference type="PDB" id="6JLJ">
    <property type="method" value="X-ray"/>
    <property type="resolution" value="2.15 A"/>
    <property type="chains" value="X/x=1-40"/>
</dbReference>
<dbReference type="PDB" id="6JLK">
    <property type="method" value="X-ray"/>
    <property type="resolution" value="2.15 A"/>
    <property type="chains" value="X/x=1-40"/>
</dbReference>
<dbReference type="PDB" id="6JLL">
    <property type="method" value="X-ray"/>
    <property type="resolution" value="2.15 A"/>
    <property type="chains" value="X/x=1-40"/>
</dbReference>
<dbReference type="PDB" id="6JLM">
    <property type="method" value="X-ray"/>
    <property type="resolution" value="2.35 A"/>
    <property type="chains" value="X/x=1-40"/>
</dbReference>
<dbReference type="PDB" id="6JLN">
    <property type="method" value="X-ray"/>
    <property type="resolution" value="2.40 A"/>
    <property type="chains" value="X/x=1-40"/>
</dbReference>
<dbReference type="PDB" id="6JLO">
    <property type="method" value="X-ray"/>
    <property type="resolution" value="2.40 A"/>
    <property type="chains" value="X/x=1-40"/>
</dbReference>
<dbReference type="PDB" id="6JLP">
    <property type="method" value="X-ray"/>
    <property type="resolution" value="2.50 A"/>
    <property type="chains" value="X/x=1-40"/>
</dbReference>
<dbReference type="PDB" id="7CJI">
    <property type="method" value="X-ray"/>
    <property type="resolution" value="2.35 A"/>
    <property type="chains" value="X/x=1-40"/>
</dbReference>
<dbReference type="PDB" id="7CJJ">
    <property type="method" value="X-ray"/>
    <property type="resolution" value="2.40 A"/>
    <property type="chains" value="X/x=1-40"/>
</dbReference>
<dbReference type="PDB" id="7COU">
    <property type="method" value="X-ray"/>
    <property type="resolution" value="2.25 A"/>
    <property type="chains" value="X/x=1-40"/>
</dbReference>
<dbReference type="PDB" id="7CZL">
    <property type="method" value="EM"/>
    <property type="resolution" value="3.78 A"/>
    <property type="chains" value="X/x=1-40"/>
</dbReference>
<dbReference type="PDB" id="7D1T">
    <property type="method" value="EM"/>
    <property type="resolution" value="1.95 A"/>
    <property type="chains" value="X/x=1-40"/>
</dbReference>
<dbReference type="PDB" id="7D1U">
    <property type="method" value="EM"/>
    <property type="resolution" value="2.08 A"/>
    <property type="chains" value="X/x=1-40"/>
</dbReference>
<dbReference type="PDB" id="7DXA">
    <property type="method" value="EM"/>
    <property type="resolution" value="3.14 A"/>
    <property type="chains" value="x=1-40"/>
</dbReference>
<dbReference type="PDB" id="7DXH">
    <property type="method" value="EM"/>
    <property type="resolution" value="3.14 A"/>
    <property type="chains" value="x=1-40"/>
</dbReference>
<dbReference type="PDB" id="7EDA">
    <property type="method" value="EM"/>
    <property type="resolution" value="2.78 A"/>
    <property type="chains" value="X=1-40"/>
</dbReference>
<dbReference type="PDB" id="8GN0">
    <property type="method" value="X-ray"/>
    <property type="resolution" value="2.15 A"/>
    <property type="chains" value="X/x=1-40"/>
</dbReference>
<dbReference type="PDB" id="8GN1">
    <property type="method" value="X-ray"/>
    <property type="resolution" value="2.10 A"/>
    <property type="chains" value="X/x=1-40"/>
</dbReference>
<dbReference type="PDB" id="8GN2">
    <property type="method" value="X-ray"/>
    <property type="resolution" value="1.95 A"/>
    <property type="chains" value="X/x=1-40"/>
</dbReference>
<dbReference type="PDB" id="8IR5">
    <property type="method" value="X-ray"/>
    <property type="resolution" value="2.15 A"/>
    <property type="chains" value="X/x=1-40"/>
</dbReference>
<dbReference type="PDB" id="8IR6">
    <property type="method" value="X-ray"/>
    <property type="resolution" value="2.20 A"/>
    <property type="chains" value="X/x=1-40"/>
</dbReference>
<dbReference type="PDB" id="8IR7">
    <property type="method" value="X-ray"/>
    <property type="resolution" value="2.25 A"/>
    <property type="chains" value="X/x=1-40"/>
</dbReference>
<dbReference type="PDB" id="8IR8">
    <property type="method" value="X-ray"/>
    <property type="resolution" value="2.25 A"/>
    <property type="chains" value="X/x=1-40"/>
</dbReference>
<dbReference type="PDB" id="8IR9">
    <property type="method" value="X-ray"/>
    <property type="resolution" value="2.20 A"/>
    <property type="chains" value="X/x=1-40"/>
</dbReference>
<dbReference type="PDB" id="8IRA">
    <property type="method" value="X-ray"/>
    <property type="resolution" value="2.20 A"/>
    <property type="chains" value="X/x=1-40"/>
</dbReference>
<dbReference type="PDB" id="8IRB">
    <property type="method" value="X-ray"/>
    <property type="resolution" value="2.30 A"/>
    <property type="chains" value="X/x=1-40"/>
</dbReference>
<dbReference type="PDB" id="8IRC">
    <property type="method" value="X-ray"/>
    <property type="resolution" value="2.25 A"/>
    <property type="chains" value="X/x=1-40"/>
</dbReference>
<dbReference type="PDB" id="8IRD">
    <property type="method" value="X-ray"/>
    <property type="resolution" value="2.30 A"/>
    <property type="chains" value="X/x=1-40"/>
</dbReference>
<dbReference type="PDB" id="8IRE">
    <property type="method" value="X-ray"/>
    <property type="resolution" value="2.25 A"/>
    <property type="chains" value="X/x=1-40"/>
</dbReference>
<dbReference type="PDB" id="8IRF">
    <property type="method" value="X-ray"/>
    <property type="resolution" value="2.25 A"/>
    <property type="chains" value="X/x=1-40"/>
</dbReference>
<dbReference type="PDB" id="8IRG">
    <property type="method" value="X-ray"/>
    <property type="resolution" value="2.30 A"/>
    <property type="chains" value="X/x=1-40"/>
</dbReference>
<dbReference type="PDB" id="8IRH">
    <property type="method" value="X-ray"/>
    <property type="resolution" value="2.25 A"/>
    <property type="chains" value="X/x=1-40"/>
</dbReference>
<dbReference type="PDB" id="8IRI">
    <property type="method" value="X-ray"/>
    <property type="resolution" value="2.25 A"/>
    <property type="chains" value="X/x=1-40"/>
</dbReference>
<dbReference type="PDBsum" id="3A0B"/>
<dbReference type="PDBsum" id="3A0H"/>
<dbReference type="PDBsum" id="3WU2"/>
<dbReference type="PDBsum" id="4IL6"/>
<dbReference type="PDBsum" id="4UB6"/>
<dbReference type="PDBsum" id="4UB8"/>
<dbReference type="PDBsum" id="5B5E"/>
<dbReference type="PDBsum" id="5B66"/>
<dbReference type="PDBsum" id="5GTH"/>
<dbReference type="PDBsum" id="5GTI"/>
<dbReference type="PDBsum" id="5V2C"/>
<dbReference type="PDBsum" id="5WS5"/>
<dbReference type="PDBsum" id="5WS6"/>
<dbReference type="PDBsum" id="6JLJ"/>
<dbReference type="PDBsum" id="6JLK"/>
<dbReference type="PDBsum" id="6JLL"/>
<dbReference type="PDBsum" id="6JLM"/>
<dbReference type="PDBsum" id="6JLN"/>
<dbReference type="PDBsum" id="6JLO"/>
<dbReference type="PDBsum" id="6JLP"/>
<dbReference type="PDBsum" id="7CJI"/>
<dbReference type="PDBsum" id="7CJJ"/>
<dbReference type="PDBsum" id="7COU"/>
<dbReference type="PDBsum" id="7CZL"/>
<dbReference type="PDBsum" id="7D1T"/>
<dbReference type="PDBsum" id="7D1U"/>
<dbReference type="PDBsum" id="7DXA"/>
<dbReference type="PDBsum" id="7DXH"/>
<dbReference type="PDBsum" id="7EDA"/>
<dbReference type="PDBsum" id="8GN0"/>
<dbReference type="PDBsum" id="8GN1"/>
<dbReference type="PDBsum" id="8GN2"/>
<dbReference type="PDBsum" id="8IR5"/>
<dbReference type="PDBsum" id="8IR6"/>
<dbReference type="PDBsum" id="8IR7"/>
<dbReference type="PDBsum" id="8IR8"/>
<dbReference type="PDBsum" id="8IR9"/>
<dbReference type="PDBsum" id="8IRA"/>
<dbReference type="PDBsum" id="8IRB"/>
<dbReference type="PDBsum" id="8IRC"/>
<dbReference type="PDBsum" id="8IRD"/>
<dbReference type="PDBsum" id="8IRE"/>
<dbReference type="PDBsum" id="8IRF"/>
<dbReference type="PDBsum" id="8IRG"/>
<dbReference type="PDBsum" id="8IRH"/>
<dbReference type="PDBsum" id="8IRI"/>
<dbReference type="EMDB" id="EMD-30511"/>
<dbReference type="EMDB" id="EMD-30547"/>
<dbReference type="EMDB" id="EMD-30548"/>
<dbReference type="EMDB" id="EMD-30902"/>
<dbReference type="EMDB" id="EMD-30909"/>
<dbReference type="EMDB" id="EMD-31062"/>
<dbReference type="SMR" id="D0VWR4"/>
<dbReference type="DIP" id="DIP-61469N"/>
<dbReference type="IntAct" id="D0VWR4">
    <property type="interactions" value="1"/>
</dbReference>
<dbReference type="EvolutionaryTrace" id="D0VWR4"/>
<dbReference type="GO" id="GO:0009523">
    <property type="term" value="C:photosystem II"/>
    <property type="evidence" value="ECO:0007669"/>
    <property type="project" value="UniProtKB-KW"/>
</dbReference>
<dbReference type="GO" id="GO:0031676">
    <property type="term" value="C:plasma membrane-derived thylakoid membrane"/>
    <property type="evidence" value="ECO:0007669"/>
    <property type="project" value="UniProtKB-SubCell"/>
</dbReference>
<dbReference type="GO" id="GO:0015979">
    <property type="term" value="P:photosynthesis"/>
    <property type="evidence" value="ECO:0007669"/>
    <property type="project" value="UniProtKB-KW"/>
</dbReference>
<dbReference type="Gene3D" id="1.20.5.510">
    <property type="entry name" value="Single helix bin"/>
    <property type="match status" value="1"/>
</dbReference>
<dbReference type="HAMAP" id="MF_01386">
    <property type="entry name" value="PSII_PsbX_1"/>
    <property type="match status" value="1"/>
</dbReference>
<dbReference type="InterPro" id="IPR009518">
    <property type="entry name" value="PSII_PsbX"/>
</dbReference>
<dbReference type="InterPro" id="IPR023431">
    <property type="entry name" value="PSII_PsbX_type_1_subfam"/>
</dbReference>
<dbReference type="Pfam" id="PF06596">
    <property type="entry name" value="PsbX"/>
    <property type="match status" value="1"/>
</dbReference>
<comment type="function">
    <text evidence="1 2 3 5">Involved in the binding and/or turnover of quinones at the Q(B) site of photosystem II (PSII). PSII is a light-driven water plastoquinone oxidoreductase, using light energy to abstract electrons from H(2)O, generating a proton gradient subsequently used for ATP formation.</text>
</comment>
<comment type="cofactor">
    <text evidence="3 4 5">PSII binds multiple chlorophylls, carotenoids and specific lipids.</text>
</comment>
<comment type="subunit">
    <text evidence="1 2 3 4 5">PSII is composed of 1 copy each of membrane proteins PsbA, PsbB, PsbC, PsbD, PsbE, PsbF, PsbH, PsbI, PsbJ, PsbK, PsbL, PsbM, PsbT, PsbX, PsbY, PsbZ, Psb30/Ycf12, peripheral proteins PsbO, CyanoQ (PsbQ), PsbU, PsbV and a large number of cofactors. It forms dimeric complexes.</text>
</comment>
<comment type="subcellular location">
    <subcellularLocation>
        <location evidence="1 2 3 4 5">Cellular thylakoid membrane</location>
        <topology evidence="1 2 3 4 5">Single-pass membrane protein</topology>
    </subcellularLocation>
</comment>
<comment type="similarity">
    <text evidence="1 6">Belongs to the PsbX family. Type 1 subfamily.</text>
</comment>
<proteinExistence type="evidence at protein level"/>
<feature type="chain" id="PRO_0000422604" description="Photosystem II reaction center protein X">
    <location>
        <begin position="1" status="less than"/>
        <end position="40"/>
    </location>
</feature>
<feature type="topological domain" description="Lumenal" evidence="4">
    <location>
        <begin position="1"/>
        <end position="11"/>
    </location>
</feature>
<feature type="transmembrane region" description="Helical" evidence="4">
    <location>
        <begin position="12"/>
        <end position="28"/>
    </location>
</feature>
<feature type="topological domain" description="Cytoplasmic" evidence="4">
    <location>
        <begin position="29"/>
        <end position="40"/>
    </location>
</feature>
<feature type="non-terminal residue">
    <location>
        <position position="1"/>
    </location>
</feature>
<feature type="helix" evidence="7">
    <location>
        <begin position="4"/>
        <end position="33"/>
    </location>
</feature>
<protein>
    <recommendedName>
        <fullName evidence="1">Photosystem II reaction center protein X</fullName>
    </recommendedName>
</protein>
<gene>
    <name evidence="1" type="primary">psbX</name>
</gene>
<reference key="1">
    <citation type="journal article" date="2003" name="Proc. Natl. Acad. Sci. U.S.A.">
        <title>Crystal structure of oxygen-evolving photosystem II from Thermosynechococcus vulcanus at 3.7-A resolution.</title>
        <authorList>
            <person name="Kamiya N."/>
            <person name="Shen J.-R."/>
        </authorList>
    </citation>
    <scope>X-RAY CRYSTALLOGRAPHY (3.70 ANGSTROMS) IN PHOTOSYSTEM II</scope>
    <scope>COFACTOR</scope>
    <scope>SUBUNIT</scope>
    <scope>SUBCELLULAR LOCATION</scope>
</reference>
<reference key="2">
    <citation type="journal article" date="2009" name="Proc. Natl. Acad. Sci. U.S.A.">
        <title>Location of chloride and its possible functions in oxygen-evolving photosystem II revealed by X-ray crystallography.</title>
        <authorList>
            <person name="Kawakami K."/>
            <person name="Umena Y."/>
            <person name="Kamiya N."/>
            <person name="Shen J.R."/>
        </authorList>
    </citation>
    <scope>X-RAY CRYSTALLOGRAPHY (3.70 ANGSTROMS) OF 1-34 IN PHOTOSYSTEM II</scope>
    <scope>FUNCTION</scope>
    <scope>COFACTOR</scope>
    <scope>SUBUNIT</scope>
    <scope>SUBCELLULAR LOCATION</scope>
</reference>
<reference key="3">
    <citation type="journal article" date="2011" name="Nature">
        <title>Crystal structure of oxygen-evolving photosystem II at a resolution of 1.9 A.</title>
        <authorList>
            <person name="Umena Y."/>
            <person name="Kawakami K."/>
            <person name="Shen J.R."/>
            <person name="Kamiya N."/>
        </authorList>
    </citation>
    <scope>X-RAY CRYSTALLOGRAPHY (1.90 ANGSTROMS) OF 1-39 IN PHOTOSYSTEM II</scope>
    <scope>COFACTOR</scope>
    <scope>SUBUNIT</scope>
    <scope>SUBCELLULAR LOCATION</scope>
    <scope>TOPOLOGY</scope>
</reference>
<reference key="4">
    <citation type="journal article" date="2013" name="Proc. Natl. Acad. Sci. U.S.A.">
        <title>Structure of Sr-substituted photosystem II at 2.1 A resolution and its implications in the mechanism of water oxidation.</title>
        <authorList>
            <person name="Koua F.H."/>
            <person name="Umena Y."/>
            <person name="Kawakami K."/>
            <person name="Shen J.R."/>
        </authorList>
    </citation>
    <scope>X-RAY CRYSTALLOGRAPHY (2.1 ANGSTROMS) IN PHOTOSYSTEM II</scope>
    <scope>FUNCTION</scope>
    <scope>COFACTOR</scope>
    <scope>SUBUNIT</scope>
    <scope>SUBCELLULAR LOCATION</scope>
</reference>